<keyword id="KW-0021">Allosteric enzyme</keyword>
<keyword id="KW-0067">ATP-binding</keyword>
<keyword id="KW-0963">Cytoplasm</keyword>
<keyword id="KW-0324">Glycolysis</keyword>
<keyword id="KW-0418">Kinase</keyword>
<keyword id="KW-0460">Magnesium</keyword>
<keyword id="KW-0479">Metal-binding</keyword>
<keyword id="KW-0547">Nucleotide-binding</keyword>
<keyword id="KW-1185">Reference proteome</keyword>
<keyword id="KW-0808">Transferase</keyword>
<dbReference type="EC" id="2.7.1.11" evidence="1"/>
<dbReference type="EMBL" id="AE017308">
    <property type="protein sequence ID" value="AAT27806.1"/>
    <property type="molecule type" value="Genomic_DNA"/>
</dbReference>
<dbReference type="RefSeq" id="WP_011264840.1">
    <property type="nucleotide sequence ID" value="NC_006908.1"/>
</dbReference>
<dbReference type="SMR" id="Q6KHX0"/>
<dbReference type="STRING" id="267748.MMOB3200"/>
<dbReference type="KEGG" id="mmo:MMOB3200"/>
<dbReference type="eggNOG" id="COG0205">
    <property type="taxonomic scope" value="Bacteria"/>
</dbReference>
<dbReference type="HOGENOM" id="CLU_020655_0_1_14"/>
<dbReference type="OrthoDB" id="9802503at2"/>
<dbReference type="UniPathway" id="UPA00109">
    <property type="reaction ID" value="UER00182"/>
</dbReference>
<dbReference type="Proteomes" id="UP000009072">
    <property type="component" value="Chromosome"/>
</dbReference>
<dbReference type="GO" id="GO:0005945">
    <property type="term" value="C:6-phosphofructokinase complex"/>
    <property type="evidence" value="ECO:0007669"/>
    <property type="project" value="TreeGrafter"/>
</dbReference>
<dbReference type="GO" id="GO:0003872">
    <property type="term" value="F:6-phosphofructokinase activity"/>
    <property type="evidence" value="ECO:0007669"/>
    <property type="project" value="UniProtKB-UniRule"/>
</dbReference>
<dbReference type="GO" id="GO:0016208">
    <property type="term" value="F:AMP binding"/>
    <property type="evidence" value="ECO:0007669"/>
    <property type="project" value="TreeGrafter"/>
</dbReference>
<dbReference type="GO" id="GO:0005524">
    <property type="term" value="F:ATP binding"/>
    <property type="evidence" value="ECO:0007669"/>
    <property type="project" value="UniProtKB-KW"/>
</dbReference>
<dbReference type="GO" id="GO:0070095">
    <property type="term" value="F:fructose-6-phosphate binding"/>
    <property type="evidence" value="ECO:0007669"/>
    <property type="project" value="TreeGrafter"/>
</dbReference>
<dbReference type="GO" id="GO:0042802">
    <property type="term" value="F:identical protein binding"/>
    <property type="evidence" value="ECO:0007669"/>
    <property type="project" value="TreeGrafter"/>
</dbReference>
<dbReference type="GO" id="GO:0046872">
    <property type="term" value="F:metal ion binding"/>
    <property type="evidence" value="ECO:0007669"/>
    <property type="project" value="UniProtKB-KW"/>
</dbReference>
<dbReference type="GO" id="GO:0048029">
    <property type="term" value="F:monosaccharide binding"/>
    <property type="evidence" value="ECO:0007669"/>
    <property type="project" value="TreeGrafter"/>
</dbReference>
<dbReference type="GO" id="GO:0061621">
    <property type="term" value="P:canonical glycolysis"/>
    <property type="evidence" value="ECO:0007669"/>
    <property type="project" value="TreeGrafter"/>
</dbReference>
<dbReference type="GO" id="GO:0030388">
    <property type="term" value="P:fructose 1,6-bisphosphate metabolic process"/>
    <property type="evidence" value="ECO:0007669"/>
    <property type="project" value="TreeGrafter"/>
</dbReference>
<dbReference type="GO" id="GO:0006002">
    <property type="term" value="P:fructose 6-phosphate metabolic process"/>
    <property type="evidence" value="ECO:0007669"/>
    <property type="project" value="InterPro"/>
</dbReference>
<dbReference type="FunFam" id="3.40.50.450:FF:000001">
    <property type="entry name" value="ATP-dependent 6-phosphofructokinase"/>
    <property type="match status" value="1"/>
</dbReference>
<dbReference type="Gene3D" id="3.40.50.450">
    <property type="match status" value="1"/>
</dbReference>
<dbReference type="Gene3D" id="3.40.50.460">
    <property type="entry name" value="Phosphofructokinase domain"/>
    <property type="match status" value="1"/>
</dbReference>
<dbReference type="HAMAP" id="MF_00339">
    <property type="entry name" value="Phosphofructokinase_I_B1"/>
    <property type="match status" value="1"/>
</dbReference>
<dbReference type="InterPro" id="IPR022953">
    <property type="entry name" value="ATP_PFK"/>
</dbReference>
<dbReference type="InterPro" id="IPR012003">
    <property type="entry name" value="ATP_PFK_prok-type"/>
</dbReference>
<dbReference type="InterPro" id="IPR012828">
    <property type="entry name" value="PFKA_ATP_prok"/>
</dbReference>
<dbReference type="InterPro" id="IPR015912">
    <property type="entry name" value="Phosphofructokinase_CS"/>
</dbReference>
<dbReference type="InterPro" id="IPR000023">
    <property type="entry name" value="Phosphofructokinase_dom"/>
</dbReference>
<dbReference type="InterPro" id="IPR035966">
    <property type="entry name" value="PKF_sf"/>
</dbReference>
<dbReference type="NCBIfam" id="TIGR02482">
    <property type="entry name" value="PFKA_ATP"/>
    <property type="match status" value="1"/>
</dbReference>
<dbReference type="NCBIfam" id="NF002872">
    <property type="entry name" value="PRK03202.1"/>
    <property type="match status" value="1"/>
</dbReference>
<dbReference type="PANTHER" id="PTHR13697:SF4">
    <property type="entry name" value="ATP-DEPENDENT 6-PHOSPHOFRUCTOKINASE"/>
    <property type="match status" value="1"/>
</dbReference>
<dbReference type="PANTHER" id="PTHR13697">
    <property type="entry name" value="PHOSPHOFRUCTOKINASE"/>
    <property type="match status" value="1"/>
</dbReference>
<dbReference type="Pfam" id="PF00365">
    <property type="entry name" value="PFK"/>
    <property type="match status" value="1"/>
</dbReference>
<dbReference type="PIRSF" id="PIRSF000532">
    <property type="entry name" value="ATP_PFK_prok"/>
    <property type="match status" value="1"/>
</dbReference>
<dbReference type="PRINTS" id="PR00476">
    <property type="entry name" value="PHFRCTKINASE"/>
</dbReference>
<dbReference type="SUPFAM" id="SSF53784">
    <property type="entry name" value="Phosphofructokinase"/>
    <property type="match status" value="1"/>
</dbReference>
<dbReference type="PROSITE" id="PS00433">
    <property type="entry name" value="PHOSPHOFRUCTOKINASE"/>
    <property type="match status" value="1"/>
</dbReference>
<proteinExistence type="inferred from homology"/>
<sequence length="325" mass="35000">MAKKIAILTSGGDSPGMNNAIRTIVKTSKIHGIEVFLVYNGYKGLVEKTIKNANEINVDQYIGSGGTFIGSARYLEFKKLEVRQKAVQNLKEMGIDSLVVIGGDGSYAGAQLLHELGVKTIGLPGTIDNDIASTEYTIGLDTALNTIVENVDRLRDTMNSMNMVALVEVMGHGAGDLAMLSGLATGAEIIVTNAHRKSIDEMIEIVKDQMIAKTKRSVIGIVSEFIYDDLKKVAKEIEDKTGIRTRAIILAHTQRGGNPKAYERINASFLGIAAVESLLKNESGVALGFKGNKIISTPIPEALKAQNSAKNENELVTKINKINQS</sequence>
<feature type="chain" id="PRO_1000059782" description="ATP-dependent 6-phosphofructokinase">
    <location>
        <begin position="1"/>
        <end position="325"/>
    </location>
</feature>
<feature type="active site" description="Proton acceptor" evidence="1">
    <location>
        <position position="128"/>
    </location>
</feature>
<feature type="binding site" evidence="1">
    <location>
        <position position="12"/>
    </location>
    <ligand>
        <name>ATP</name>
        <dbReference type="ChEBI" id="CHEBI:30616"/>
    </ligand>
</feature>
<feature type="binding site" evidence="1">
    <location>
        <begin position="22"/>
        <end position="26"/>
    </location>
    <ligand>
        <name>ADP</name>
        <dbReference type="ChEBI" id="CHEBI:456216"/>
        <note>allosteric activator; ligand shared between dimeric partners</note>
    </ligand>
</feature>
<feature type="binding site" evidence="1">
    <location>
        <begin position="73"/>
        <end position="74"/>
    </location>
    <ligand>
        <name>ATP</name>
        <dbReference type="ChEBI" id="CHEBI:30616"/>
    </ligand>
</feature>
<feature type="binding site" evidence="1">
    <location>
        <begin position="103"/>
        <end position="106"/>
    </location>
    <ligand>
        <name>ATP</name>
        <dbReference type="ChEBI" id="CHEBI:30616"/>
    </ligand>
</feature>
<feature type="binding site" evidence="1">
    <location>
        <position position="104"/>
    </location>
    <ligand>
        <name>Mg(2+)</name>
        <dbReference type="ChEBI" id="CHEBI:18420"/>
        <note>catalytic</note>
    </ligand>
</feature>
<feature type="binding site" description="in other chain" evidence="1">
    <location>
        <begin position="126"/>
        <end position="128"/>
    </location>
    <ligand>
        <name>substrate</name>
        <note>ligand shared between dimeric partners</note>
    </ligand>
</feature>
<feature type="binding site" description="in other chain" evidence="1">
    <location>
        <position position="155"/>
    </location>
    <ligand>
        <name>ADP</name>
        <dbReference type="ChEBI" id="CHEBI:456216"/>
        <note>allosteric activator; ligand shared between dimeric partners</note>
    </ligand>
</feature>
<feature type="binding site" description="in other chain" evidence="1">
    <location>
        <begin position="170"/>
        <end position="172"/>
    </location>
    <ligand>
        <name>substrate</name>
        <note>ligand shared between dimeric partners</note>
    </ligand>
</feature>
<feature type="binding site" description="in other chain" evidence="1">
    <location>
        <begin position="186"/>
        <end position="188"/>
    </location>
    <ligand>
        <name>ADP</name>
        <dbReference type="ChEBI" id="CHEBI:456216"/>
        <note>allosteric activator; ligand shared between dimeric partners</note>
    </ligand>
</feature>
<feature type="binding site" description="in other chain" evidence="1">
    <location>
        <position position="213"/>
    </location>
    <ligand>
        <name>ADP</name>
        <dbReference type="ChEBI" id="CHEBI:456216"/>
        <note>allosteric activator; ligand shared between dimeric partners</note>
    </ligand>
</feature>
<feature type="binding site" description="in other chain" evidence="1">
    <location>
        <begin position="215"/>
        <end position="217"/>
    </location>
    <ligand>
        <name>ADP</name>
        <dbReference type="ChEBI" id="CHEBI:456216"/>
        <note>allosteric activator; ligand shared between dimeric partners</note>
    </ligand>
</feature>
<feature type="binding site" description="in other chain" evidence="1">
    <location>
        <position position="224"/>
    </location>
    <ligand>
        <name>substrate</name>
        <note>ligand shared between dimeric partners</note>
    </ligand>
</feature>
<feature type="binding site" evidence="1">
    <location>
        <position position="246"/>
    </location>
    <ligand>
        <name>substrate</name>
        <note>ligand shared between dimeric partners</note>
    </ligand>
</feature>
<feature type="binding site" description="in other chain" evidence="1">
    <location>
        <begin position="252"/>
        <end position="255"/>
    </location>
    <ligand>
        <name>substrate</name>
        <note>ligand shared between dimeric partners</note>
    </ligand>
</feature>
<reference key="1">
    <citation type="journal article" date="2004" name="Genome Res.">
        <title>The complete genome and proteome of Mycoplasma mobile.</title>
        <authorList>
            <person name="Jaffe J.D."/>
            <person name="Stange-Thomann N."/>
            <person name="Smith C."/>
            <person name="DeCaprio D."/>
            <person name="Fisher S."/>
            <person name="Butler J."/>
            <person name="Calvo S."/>
            <person name="Elkins T."/>
            <person name="FitzGerald M.G."/>
            <person name="Hafez N."/>
            <person name="Kodira C.D."/>
            <person name="Major J."/>
            <person name="Wang S."/>
            <person name="Wilkinson J."/>
            <person name="Nicol R."/>
            <person name="Nusbaum C."/>
            <person name="Birren B."/>
            <person name="Berg H.C."/>
            <person name="Church G.M."/>
        </authorList>
    </citation>
    <scope>NUCLEOTIDE SEQUENCE [LARGE SCALE GENOMIC DNA]</scope>
    <source>
        <strain>ATCC 43663 / NCTC 11711 / 163 K</strain>
    </source>
</reference>
<comment type="function">
    <text evidence="1">Catalyzes the phosphorylation of D-fructose 6-phosphate to fructose 1,6-bisphosphate by ATP, the first committing step of glycolysis.</text>
</comment>
<comment type="catalytic activity">
    <reaction evidence="1">
        <text>beta-D-fructose 6-phosphate + ATP = beta-D-fructose 1,6-bisphosphate + ADP + H(+)</text>
        <dbReference type="Rhea" id="RHEA:16109"/>
        <dbReference type="ChEBI" id="CHEBI:15378"/>
        <dbReference type="ChEBI" id="CHEBI:30616"/>
        <dbReference type="ChEBI" id="CHEBI:32966"/>
        <dbReference type="ChEBI" id="CHEBI:57634"/>
        <dbReference type="ChEBI" id="CHEBI:456216"/>
        <dbReference type="EC" id="2.7.1.11"/>
    </reaction>
</comment>
<comment type="cofactor">
    <cofactor evidence="1">
        <name>Mg(2+)</name>
        <dbReference type="ChEBI" id="CHEBI:18420"/>
    </cofactor>
</comment>
<comment type="activity regulation">
    <text evidence="1">Allosterically activated by ADP and other diphosphonucleosides, and allosterically inhibited by phosphoenolpyruvate.</text>
</comment>
<comment type="pathway">
    <text evidence="1">Carbohydrate degradation; glycolysis; D-glyceraldehyde 3-phosphate and glycerone phosphate from D-glucose: step 3/4.</text>
</comment>
<comment type="subunit">
    <text evidence="1">Homotetramer.</text>
</comment>
<comment type="subcellular location">
    <subcellularLocation>
        <location evidence="1">Cytoplasm</location>
    </subcellularLocation>
</comment>
<comment type="similarity">
    <text evidence="1">Belongs to the phosphofructokinase type A (PFKA) family. ATP-dependent PFK group I subfamily. Prokaryotic clade 'B1' sub-subfamily.</text>
</comment>
<accession>Q6KHX0</accession>
<evidence type="ECO:0000255" key="1">
    <source>
        <dbReference type="HAMAP-Rule" id="MF_00339"/>
    </source>
</evidence>
<organism>
    <name type="scientific">Mycoplasma mobile (strain ATCC 43663 / 163K / NCTC 11711)</name>
    <name type="common">Mesomycoplasma mobile</name>
    <dbReference type="NCBI Taxonomy" id="267748"/>
    <lineage>
        <taxon>Bacteria</taxon>
        <taxon>Bacillati</taxon>
        <taxon>Mycoplasmatota</taxon>
        <taxon>Mycoplasmoidales</taxon>
        <taxon>Metamycoplasmataceae</taxon>
        <taxon>Mesomycoplasma</taxon>
    </lineage>
</organism>
<name>PFKA_MYCM1</name>
<protein>
    <recommendedName>
        <fullName evidence="1">ATP-dependent 6-phosphofructokinase</fullName>
        <shortName evidence="1">ATP-PFK</shortName>
        <shortName evidence="1">Phosphofructokinase</shortName>
        <ecNumber evidence="1">2.7.1.11</ecNumber>
    </recommendedName>
    <alternativeName>
        <fullName evidence="1">Phosphohexokinase</fullName>
    </alternativeName>
</protein>
<gene>
    <name evidence="1" type="primary">pfkA</name>
    <name type="ordered locus">MMOB3200</name>
</gene>